<accession>Q57T53</accession>
<comment type="catalytic activity">
    <reaction evidence="1">
        <text>(S)-4-amino-5-oxopentanoate = 5-aminolevulinate</text>
        <dbReference type="Rhea" id="RHEA:14265"/>
        <dbReference type="ChEBI" id="CHEBI:57501"/>
        <dbReference type="ChEBI" id="CHEBI:356416"/>
        <dbReference type="EC" id="5.4.3.8"/>
    </reaction>
</comment>
<comment type="cofactor">
    <cofactor evidence="1">
        <name>pyridoxal 5'-phosphate</name>
        <dbReference type="ChEBI" id="CHEBI:597326"/>
    </cofactor>
</comment>
<comment type="pathway">
    <text evidence="1">Porphyrin-containing compound metabolism; protoporphyrin-IX biosynthesis; 5-aminolevulinate from L-glutamyl-tRNA(Glu): step 2/2.</text>
</comment>
<comment type="subunit">
    <text evidence="1">Homodimer.</text>
</comment>
<comment type="subcellular location">
    <subcellularLocation>
        <location evidence="1">Cytoplasm</location>
    </subcellularLocation>
</comment>
<comment type="similarity">
    <text evidence="1">Belongs to the class-III pyridoxal-phosphate-dependent aminotransferase family. HemL subfamily.</text>
</comment>
<reference key="1">
    <citation type="journal article" date="2005" name="Nucleic Acids Res.">
        <title>The genome sequence of Salmonella enterica serovar Choleraesuis, a highly invasive and resistant zoonotic pathogen.</title>
        <authorList>
            <person name="Chiu C.-H."/>
            <person name="Tang P."/>
            <person name="Chu C."/>
            <person name="Hu S."/>
            <person name="Bao Q."/>
            <person name="Yu J."/>
            <person name="Chou Y.-Y."/>
            <person name="Wang H.-S."/>
            <person name="Lee Y.-S."/>
        </authorList>
    </citation>
    <scope>NUCLEOTIDE SEQUENCE [LARGE SCALE GENOMIC DNA]</scope>
    <source>
        <strain>SC-B67</strain>
    </source>
</reference>
<proteinExistence type="inferred from homology"/>
<sequence>MSKSENLYSAARELIPGGVNSPVRAFTGVGGTPLFIEKADGAYLYDVDGKAYIDYVGSWGPMVLGHNHPAIRNAVIEAAERGLSFGAPTEMEVKMAELVTNLVPTMDMVRMVNSGTEATMSAIRLARGFTGRDKIIKFEGCYHGHADCLLVKAGSGALTLGQPNSPGVPADFAKHTLTCTYNDLTSVRAAFEQYPQEIACIIVEPVAGNMNCVPPLPEFLPGLRALCDEFGALLIIDEVMTGFRVALAGAQDYYGVVPDLTCLGKIIGGGMPVGAFGGRRDVMDALAPTGPVYQAGTLSGNPIAMAAGFACLNEVAQPGIHETLDELTTRLAEGLCEAAQEVGIPLVVNHVGGMFGIFFTDAETVTCYQDVMACDVERFKRFFHLMLEEGVYLAPSAFEAGFMSVAHSEEDINNTIDAARRVFAKQ</sequence>
<dbReference type="EC" id="5.4.3.8" evidence="1"/>
<dbReference type="EMBL" id="AE017220">
    <property type="protein sequence ID" value="AAX64108.1"/>
    <property type="molecule type" value="Genomic_DNA"/>
</dbReference>
<dbReference type="RefSeq" id="WP_000045260.1">
    <property type="nucleotide sequence ID" value="NC_006905.1"/>
</dbReference>
<dbReference type="SMR" id="Q57T53"/>
<dbReference type="KEGG" id="sec:SCH_0202"/>
<dbReference type="HOGENOM" id="CLU_016922_1_5_6"/>
<dbReference type="UniPathway" id="UPA00251">
    <property type="reaction ID" value="UER00317"/>
</dbReference>
<dbReference type="Proteomes" id="UP000000538">
    <property type="component" value="Chromosome"/>
</dbReference>
<dbReference type="GO" id="GO:0005737">
    <property type="term" value="C:cytoplasm"/>
    <property type="evidence" value="ECO:0007669"/>
    <property type="project" value="UniProtKB-SubCell"/>
</dbReference>
<dbReference type="GO" id="GO:0042286">
    <property type="term" value="F:glutamate-1-semialdehyde 2,1-aminomutase activity"/>
    <property type="evidence" value="ECO:0007669"/>
    <property type="project" value="UniProtKB-UniRule"/>
</dbReference>
<dbReference type="GO" id="GO:0030170">
    <property type="term" value="F:pyridoxal phosphate binding"/>
    <property type="evidence" value="ECO:0007669"/>
    <property type="project" value="InterPro"/>
</dbReference>
<dbReference type="GO" id="GO:0008483">
    <property type="term" value="F:transaminase activity"/>
    <property type="evidence" value="ECO:0007669"/>
    <property type="project" value="InterPro"/>
</dbReference>
<dbReference type="GO" id="GO:0006782">
    <property type="term" value="P:protoporphyrinogen IX biosynthetic process"/>
    <property type="evidence" value="ECO:0007669"/>
    <property type="project" value="UniProtKB-UniRule"/>
</dbReference>
<dbReference type="CDD" id="cd00610">
    <property type="entry name" value="OAT_like"/>
    <property type="match status" value="1"/>
</dbReference>
<dbReference type="FunFam" id="3.40.640.10:FF:000021">
    <property type="entry name" value="Glutamate-1-semialdehyde 2,1-aminomutase"/>
    <property type="match status" value="1"/>
</dbReference>
<dbReference type="FunFam" id="3.90.1150.10:FF:000012">
    <property type="entry name" value="Glutamate-1-semialdehyde 2,1-aminomutase"/>
    <property type="match status" value="1"/>
</dbReference>
<dbReference type="Gene3D" id="3.90.1150.10">
    <property type="entry name" value="Aspartate Aminotransferase, domain 1"/>
    <property type="match status" value="1"/>
</dbReference>
<dbReference type="Gene3D" id="3.40.640.10">
    <property type="entry name" value="Type I PLP-dependent aspartate aminotransferase-like (Major domain)"/>
    <property type="match status" value="1"/>
</dbReference>
<dbReference type="HAMAP" id="MF_00375">
    <property type="entry name" value="HemL_aminotrans_3"/>
    <property type="match status" value="1"/>
</dbReference>
<dbReference type="InterPro" id="IPR004639">
    <property type="entry name" value="4pyrrol_synth_GluAld_NH2Trfase"/>
</dbReference>
<dbReference type="InterPro" id="IPR005814">
    <property type="entry name" value="Aminotrans_3"/>
</dbReference>
<dbReference type="InterPro" id="IPR049704">
    <property type="entry name" value="Aminotrans_3_PPA_site"/>
</dbReference>
<dbReference type="InterPro" id="IPR015424">
    <property type="entry name" value="PyrdxlP-dep_Trfase"/>
</dbReference>
<dbReference type="InterPro" id="IPR015421">
    <property type="entry name" value="PyrdxlP-dep_Trfase_major"/>
</dbReference>
<dbReference type="InterPro" id="IPR015422">
    <property type="entry name" value="PyrdxlP-dep_Trfase_small"/>
</dbReference>
<dbReference type="NCBIfam" id="TIGR00713">
    <property type="entry name" value="hemL"/>
    <property type="match status" value="1"/>
</dbReference>
<dbReference type="NCBIfam" id="NF000818">
    <property type="entry name" value="PRK00062.1"/>
    <property type="match status" value="1"/>
</dbReference>
<dbReference type="PANTHER" id="PTHR43713">
    <property type="entry name" value="GLUTAMATE-1-SEMIALDEHYDE 2,1-AMINOMUTASE"/>
    <property type="match status" value="1"/>
</dbReference>
<dbReference type="PANTHER" id="PTHR43713:SF3">
    <property type="entry name" value="GLUTAMATE-1-SEMIALDEHYDE 2,1-AMINOMUTASE 1, CHLOROPLASTIC-RELATED"/>
    <property type="match status" value="1"/>
</dbReference>
<dbReference type="Pfam" id="PF00202">
    <property type="entry name" value="Aminotran_3"/>
    <property type="match status" value="1"/>
</dbReference>
<dbReference type="SUPFAM" id="SSF53383">
    <property type="entry name" value="PLP-dependent transferases"/>
    <property type="match status" value="1"/>
</dbReference>
<dbReference type="PROSITE" id="PS00600">
    <property type="entry name" value="AA_TRANSFER_CLASS_3"/>
    <property type="match status" value="1"/>
</dbReference>
<organism>
    <name type="scientific">Salmonella choleraesuis (strain SC-B67)</name>
    <dbReference type="NCBI Taxonomy" id="321314"/>
    <lineage>
        <taxon>Bacteria</taxon>
        <taxon>Pseudomonadati</taxon>
        <taxon>Pseudomonadota</taxon>
        <taxon>Gammaproteobacteria</taxon>
        <taxon>Enterobacterales</taxon>
        <taxon>Enterobacteriaceae</taxon>
        <taxon>Salmonella</taxon>
    </lineage>
</organism>
<evidence type="ECO:0000255" key="1">
    <source>
        <dbReference type="HAMAP-Rule" id="MF_00375"/>
    </source>
</evidence>
<name>GSA_SALCH</name>
<gene>
    <name evidence="1" type="primary">hemL</name>
    <name type="ordered locus">SCH_0202</name>
</gene>
<keyword id="KW-0963">Cytoplasm</keyword>
<keyword id="KW-0413">Isomerase</keyword>
<keyword id="KW-0627">Porphyrin biosynthesis</keyword>
<keyword id="KW-0663">Pyridoxal phosphate</keyword>
<feature type="chain" id="PRO_0000243614" description="Glutamate-1-semialdehyde 2,1-aminomutase">
    <location>
        <begin position="1"/>
        <end position="426"/>
    </location>
</feature>
<feature type="modified residue" description="N6-(pyridoxal phosphate)lysine" evidence="1">
    <location>
        <position position="265"/>
    </location>
</feature>
<protein>
    <recommendedName>
        <fullName evidence="1">Glutamate-1-semialdehyde 2,1-aminomutase</fullName>
        <shortName evidence="1">GSA</shortName>
        <ecNumber evidence="1">5.4.3.8</ecNumber>
    </recommendedName>
    <alternativeName>
        <fullName evidence="1">Glutamate-1-semialdehyde aminotransferase</fullName>
        <shortName evidence="1">GSA-AT</shortName>
    </alternativeName>
</protein>